<name>RIMM_CITK8</name>
<organism>
    <name type="scientific">Citrobacter koseri (strain ATCC BAA-895 / CDC 4225-83 / SGSC4696)</name>
    <dbReference type="NCBI Taxonomy" id="290338"/>
    <lineage>
        <taxon>Bacteria</taxon>
        <taxon>Pseudomonadati</taxon>
        <taxon>Pseudomonadota</taxon>
        <taxon>Gammaproteobacteria</taxon>
        <taxon>Enterobacterales</taxon>
        <taxon>Enterobacteriaceae</taxon>
        <taxon>Citrobacter</taxon>
    </lineage>
</organism>
<feature type="chain" id="PRO_0000321720" description="Ribosome maturation factor RimM">
    <location>
        <begin position="1"/>
        <end position="182"/>
    </location>
</feature>
<feature type="domain" description="PRC barrel" evidence="1">
    <location>
        <begin position="103"/>
        <end position="182"/>
    </location>
</feature>
<reference key="1">
    <citation type="submission" date="2007-08" db="EMBL/GenBank/DDBJ databases">
        <authorList>
            <consortium name="The Citrobacter koseri Genome Sequencing Project"/>
            <person name="McClelland M."/>
            <person name="Sanderson E.K."/>
            <person name="Porwollik S."/>
            <person name="Spieth J."/>
            <person name="Clifton W.S."/>
            <person name="Latreille P."/>
            <person name="Courtney L."/>
            <person name="Wang C."/>
            <person name="Pepin K."/>
            <person name="Bhonagiri V."/>
            <person name="Nash W."/>
            <person name="Johnson M."/>
            <person name="Thiruvilangam P."/>
            <person name="Wilson R."/>
        </authorList>
    </citation>
    <scope>NUCLEOTIDE SEQUENCE [LARGE SCALE GENOMIC DNA]</scope>
    <source>
        <strain>ATCC BAA-895 / CDC 4225-83 / SGSC4696</strain>
    </source>
</reference>
<comment type="function">
    <text evidence="1">An accessory protein needed during the final step in the assembly of 30S ribosomal subunit, possibly for assembly of the head region. Essential for efficient processing of 16S rRNA. May be needed both before and after RbfA during the maturation of 16S rRNA. It has affinity for free ribosomal 30S subunits but not for 70S ribosomes.</text>
</comment>
<comment type="subunit">
    <text evidence="1">Binds ribosomal protein uS19.</text>
</comment>
<comment type="subcellular location">
    <subcellularLocation>
        <location evidence="1">Cytoplasm</location>
    </subcellularLocation>
</comment>
<comment type="domain">
    <text evidence="1">The PRC barrel domain binds ribosomal protein uS19.</text>
</comment>
<comment type="similarity">
    <text evidence="1">Belongs to the RimM family.</text>
</comment>
<comment type="sequence caution" evidence="2">
    <conflict type="erroneous initiation">
        <sequence resource="EMBL-CDS" id="ABV15004"/>
    </conflict>
</comment>
<evidence type="ECO:0000255" key="1">
    <source>
        <dbReference type="HAMAP-Rule" id="MF_00014"/>
    </source>
</evidence>
<evidence type="ECO:0000305" key="2"/>
<sequence>MSKQLTAQAPVEPIVLGKMGSSYGIRGWLRVFSSTEDAESIFDYQPWFIQKAGQWQQVQLESWKHHNQDLIIKLKGVDDRDSANLLTNCEIVVDSSQLPALEDGSYYWKDLMGCQVVTTEGYDLGKVVDMMETGSNDVIVIKANLKDAFGIKERLVPFLDGQVIKKVDLATRTIEVDWDPGF</sequence>
<gene>
    <name evidence="1" type="primary">rimM</name>
    <name type="ordered locus">CKO_03931</name>
</gene>
<protein>
    <recommendedName>
        <fullName evidence="1">Ribosome maturation factor RimM</fullName>
    </recommendedName>
</protein>
<accession>A8ANE1</accession>
<proteinExistence type="inferred from homology"/>
<dbReference type="EMBL" id="CP000822">
    <property type="protein sequence ID" value="ABV15004.1"/>
    <property type="status" value="ALT_INIT"/>
    <property type="molecule type" value="Genomic_DNA"/>
</dbReference>
<dbReference type="RefSeq" id="WP_024130851.1">
    <property type="nucleotide sequence ID" value="NC_009792.1"/>
</dbReference>
<dbReference type="SMR" id="A8ANE1"/>
<dbReference type="STRING" id="290338.CKO_03931"/>
<dbReference type="GeneID" id="45137593"/>
<dbReference type="KEGG" id="cko:CKO_03931"/>
<dbReference type="HOGENOM" id="CLU_077636_1_0_6"/>
<dbReference type="OrthoDB" id="9783509at2"/>
<dbReference type="Proteomes" id="UP000008148">
    <property type="component" value="Chromosome"/>
</dbReference>
<dbReference type="GO" id="GO:0005737">
    <property type="term" value="C:cytoplasm"/>
    <property type="evidence" value="ECO:0007669"/>
    <property type="project" value="UniProtKB-SubCell"/>
</dbReference>
<dbReference type="GO" id="GO:0005840">
    <property type="term" value="C:ribosome"/>
    <property type="evidence" value="ECO:0007669"/>
    <property type="project" value="InterPro"/>
</dbReference>
<dbReference type="GO" id="GO:0043022">
    <property type="term" value="F:ribosome binding"/>
    <property type="evidence" value="ECO:0007669"/>
    <property type="project" value="InterPro"/>
</dbReference>
<dbReference type="GO" id="GO:0042274">
    <property type="term" value="P:ribosomal small subunit biogenesis"/>
    <property type="evidence" value="ECO:0007669"/>
    <property type="project" value="UniProtKB-UniRule"/>
</dbReference>
<dbReference type="GO" id="GO:0006364">
    <property type="term" value="P:rRNA processing"/>
    <property type="evidence" value="ECO:0007669"/>
    <property type="project" value="UniProtKB-UniRule"/>
</dbReference>
<dbReference type="FunFam" id="2.30.30.240:FF:000001">
    <property type="entry name" value="Ribosome maturation factor RimM"/>
    <property type="match status" value="1"/>
</dbReference>
<dbReference type="FunFam" id="2.40.30.60:FF:000001">
    <property type="entry name" value="Ribosome maturation factor RimM"/>
    <property type="match status" value="1"/>
</dbReference>
<dbReference type="Gene3D" id="2.30.30.240">
    <property type="entry name" value="PRC-barrel domain"/>
    <property type="match status" value="1"/>
</dbReference>
<dbReference type="Gene3D" id="2.40.30.60">
    <property type="entry name" value="RimM"/>
    <property type="match status" value="1"/>
</dbReference>
<dbReference type="HAMAP" id="MF_00014">
    <property type="entry name" value="Ribosome_mat_RimM"/>
    <property type="match status" value="1"/>
</dbReference>
<dbReference type="InterPro" id="IPR011033">
    <property type="entry name" value="PRC_barrel-like_sf"/>
</dbReference>
<dbReference type="InterPro" id="IPR056792">
    <property type="entry name" value="PRC_RimM"/>
</dbReference>
<dbReference type="InterPro" id="IPR011961">
    <property type="entry name" value="RimM"/>
</dbReference>
<dbReference type="InterPro" id="IPR002676">
    <property type="entry name" value="RimM_N"/>
</dbReference>
<dbReference type="InterPro" id="IPR036976">
    <property type="entry name" value="RimM_N_sf"/>
</dbReference>
<dbReference type="InterPro" id="IPR009000">
    <property type="entry name" value="Transl_B-barrel_sf"/>
</dbReference>
<dbReference type="NCBIfam" id="TIGR02273">
    <property type="entry name" value="16S_RimM"/>
    <property type="match status" value="1"/>
</dbReference>
<dbReference type="PANTHER" id="PTHR33692">
    <property type="entry name" value="RIBOSOME MATURATION FACTOR RIMM"/>
    <property type="match status" value="1"/>
</dbReference>
<dbReference type="PANTHER" id="PTHR33692:SF1">
    <property type="entry name" value="RIBOSOME MATURATION FACTOR RIMM"/>
    <property type="match status" value="1"/>
</dbReference>
<dbReference type="Pfam" id="PF24986">
    <property type="entry name" value="PRC_RimM"/>
    <property type="match status" value="1"/>
</dbReference>
<dbReference type="Pfam" id="PF01782">
    <property type="entry name" value="RimM"/>
    <property type="match status" value="1"/>
</dbReference>
<dbReference type="SUPFAM" id="SSF50346">
    <property type="entry name" value="PRC-barrel domain"/>
    <property type="match status" value="1"/>
</dbReference>
<dbReference type="SUPFAM" id="SSF50447">
    <property type="entry name" value="Translation proteins"/>
    <property type="match status" value="1"/>
</dbReference>
<keyword id="KW-0143">Chaperone</keyword>
<keyword id="KW-0963">Cytoplasm</keyword>
<keyword id="KW-1185">Reference proteome</keyword>
<keyword id="KW-0690">Ribosome biogenesis</keyword>
<keyword id="KW-0698">rRNA processing</keyword>